<protein>
    <recommendedName>
        <fullName evidence="1">DNA mismatch repair protein MutL</fullName>
    </recommendedName>
</protein>
<reference key="1">
    <citation type="journal article" date="2008" name="DNA Res.">
        <title>Comparative genome analysis of Lactobacillus reuteri and Lactobacillus fermentum reveal a genomic island for reuterin and cobalamin production.</title>
        <authorList>
            <person name="Morita H."/>
            <person name="Toh H."/>
            <person name="Fukuda S."/>
            <person name="Horikawa H."/>
            <person name="Oshima K."/>
            <person name="Suzuki T."/>
            <person name="Murakami M."/>
            <person name="Hisamatsu S."/>
            <person name="Kato Y."/>
            <person name="Takizawa T."/>
            <person name="Fukuoka H."/>
            <person name="Yoshimura T."/>
            <person name="Itoh K."/>
            <person name="O'Sullivan D.J."/>
            <person name="McKay L.L."/>
            <person name="Ohno H."/>
            <person name="Kikuchi J."/>
            <person name="Masaoka T."/>
            <person name="Hattori M."/>
        </authorList>
    </citation>
    <scope>NUCLEOTIDE SEQUENCE [LARGE SCALE GENOMIC DNA]</scope>
    <source>
        <strain>JCM 1112</strain>
    </source>
</reference>
<sequence>MGKIHELDNILANQIAAGEVIERPASIVKELVENSLDAHSHRVDIIVENSGLDSVRVIDDGDGIAAEDISLAFHRHATSKINSRHDLFKVQTMGFRGEALPSIASVADVTLTTAQAGQEEGTMIHLRGGKELVVKPAGARQGTDIKVTDLFFNTPARLKYLKSPQTELTRITDIINRLALANPAVAFSFTHNGRELFRSAGNNNLQQVVAAIYGVQAGRKMLEISGADDDFKVSGFVSLPELTRASRQYITITINHRYIRNFELTKAIIQGYESKLMVGRYPIAVINIDLDPVLVDVNVHPAKREVRLSKEQQLIKLIAETIRQRIAVENLIPDVDADQFIPNDDEVADLDRRLKEASPVYHAAPISAVPATEKAATEIPTPEADNPAHADALDSEIPAPIVIHHLEDLNTPAMQKFDERYQNEGEVTPFSAPVPTMTKKPVKPANIELDVHDKQDQQQNRFPDLQYIGQLQGTFLLAQAGDGLYIVDQHAAQERINYEYYRQKIGEVSADQQNFLVPLVLNYSTVDAMTINQHLDTLAAVGLELESFGQNSFILRSHPTWFKEGQEEDTAEEMIDWLIKNGKLTVKEFRMKTAIMMSCKRAIKANHHLDEREAKALLKRLPQCENPFNCPHGRPVTVHFNDQDLEKMFKRIQDSHTPYADDFDDHEF</sequence>
<name>MUTL_LIMRJ</name>
<keyword id="KW-0227">DNA damage</keyword>
<keyword id="KW-0234">DNA repair</keyword>
<evidence type="ECO:0000255" key="1">
    <source>
        <dbReference type="HAMAP-Rule" id="MF_00149"/>
    </source>
</evidence>
<organism>
    <name type="scientific">Limosilactobacillus reuteri subsp. reuteri (strain JCM 1112)</name>
    <name type="common">Lactobacillus reuteri</name>
    <dbReference type="NCBI Taxonomy" id="557433"/>
    <lineage>
        <taxon>Bacteria</taxon>
        <taxon>Bacillati</taxon>
        <taxon>Bacillota</taxon>
        <taxon>Bacilli</taxon>
        <taxon>Lactobacillales</taxon>
        <taxon>Lactobacillaceae</taxon>
        <taxon>Limosilactobacillus</taxon>
    </lineage>
</organism>
<gene>
    <name evidence="1" type="primary">mutL</name>
    <name type="ordered locus">LAR_0512</name>
</gene>
<proteinExistence type="inferred from homology"/>
<comment type="function">
    <text evidence="1">This protein is involved in the repair of mismatches in DNA. It is required for dam-dependent methyl-directed DNA mismatch repair. May act as a 'molecular matchmaker', a protein that promotes the formation of a stable complex between two or more DNA-binding proteins in an ATP-dependent manner without itself being part of a final effector complex.</text>
</comment>
<comment type="similarity">
    <text evidence="1">Belongs to the DNA mismatch repair MutL/HexB family.</text>
</comment>
<dbReference type="EMBL" id="AP007281">
    <property type="protein sequence ID" value="BAG25028.1"/>
    <property type="molecule type" value="Genomic_DNA"/>
</dbReference>
<dbReference type="RefSeq" id="WP_003667624.1">
    <property type="nucleotide sequence ID" value="NC_010609.1"/>
</dbReference>
<dbReference type="SMR" id="B2G6E6"/>
<dbReference type="KEGG" id="lrf:LAR_0512"/>
<dbReference type="HOGENOM" id="CLU_004131_4_1_9"/>
<dbReference type="GO" id="GO:0032300">
    <property type="term" value="C:mismatch repair complex"/>
    <property type="evidence" value="ECO:0007669"/>
    <property type="project" value="InterPro"/>
</dbReference>
<dbReference type="GO" id="GO:0005524">
    <property type="term" value="F:ATP binding"/>
    <property type="evidence" value="ECO:0007669"/>
    <property type="project" value="InterPro"/>
</dbReference>
<dbReference type="GO" id="GO:0016887">
    <property type="term" value="F:ATP hydrolysis activity"/>
    <property type="evidence" value="ECO:0007669"/>
    <property type="project" value="InterPro"/>
</dbReference>
<dbReference type="GO" id="GO:0140664">
    <property type="term" value="F:ATP-dependent DNA damage sensor activity"/>
    <property type="evidence" value="ECO:0007669"/>
    <property type="project" value="InterPro"/>
</dbReference>
<dbReference type="GO" id="GO:0030983">
    <property type="term" value="F:mismatched DNA binding"/>
    <property type="evidence" value="ECO:0007669"/>
    <property type="project" value="InterPro"/>
</dbReference>
<dbReference type="GO" id="GO:0006298">
    <property type="term" value="P:mismatch repair"/>
    <property type="evidence" value="ECO:0007669"/>
    <property type="project" value="UniProtKB-UniRule"/>
</dbReference>
<dbReference type="CDD" id="cd16926">
    <property type="entry name" value="HATPase_MutL-MLH-PMS-like"/>
    <property type="match status" value="1"/>
</dbReference>
<dbReference type="CDD" id="cd00782">
    <property type="entry name" value="MutL_Trans"/>
    <property type="match status" value="1"/>
</dbReference>
<dbReference type="FunFam" id="3.30.565.10:FF:000003">
    <property type="entry name" value="DNA mismatch repair endonuclease MutL"/>
    <property type="match status" value="1"/>
</dbReference>
<dbReference type="Gene3D" id="3.30.230.10">
    <property type="match status" value="1"/>
</dbReference>
<dbReference type="Gene3D" id="3.30.565.10">
    <property type="entry name" value="Histidine kinase-like ATPase, C-terminal domain"/>
    <property type="match status" value="1"/>
</dbReference>
<dbReference type="Gene3D" id="3.30.1540.20">
    <property type="entry name" value="MutL, C-terminal domain, dimerisation subdomain"/>
    <property type="match status" value="1"/>
</dbReference>
<dbReference type="Gene3D" id="3.30.1370.100">
    <property type="entry name" value="MutL, C-terminal domain, regulatory subdomain"/>
    <property type="match status" value="1"/>
</dbReference>
<dbReference type="HAMAP" id="MF_00149">
    <property type="entry name" value="DNA_mis_repair"/>
    <property type="match status" value="1"/>
</dbReference>
<dbReference type="InterPro" id="IPR014762">
    <property type="entry name" value="DNA_mismatch_repair_CS"/>
</dbReference>
<dbReference type="InterPro" id="IPR020667">
    <property type="entry name" value="DNA_mismatch_repair_MutL"/>
</dbReference>
<dbReference type="InterPro" id="IPR013507">
    <property type="entry name" value="DNA_mismatch_S5_2-like"/>
</dbReference>
<dbReference type="InterPro" id="IPR036890">
    <property type="entry name" value="HATPase_C_sf"/>
</dbReference>
<dbReference type="InterPro" id="IPR002099">
    <property type="entry name" value="MutL/Mlh/PMS"/>
</dbReference>
<dbReference type="InterPro" id="IPR038973">
    <property type="entry name" value="MutL/Mlh/Pms-like"/>
</dbReference>
<dbReference type="InterPro" id="IPR014790">
    <property type="entry name" value="MutL_C"/>
</dbReference>
<dbReference type="InterPro" id="IPR042120">
    <property type="entry name" value="MutL_C_dimsub"/>
</dbReference>
<dbReference type="InterPro" id="IPR042121">
    <property type="entry name" value="MutL_C_regsub"/>
</dbReference>
<dbReference type="InterPro" id="IPR037198">
    <property type="entry name" value="MutL_C_sf"/>
</dbReference>
<dbReference type="InterPro" id="IPR020568">
    <property type="entry name" value="Ribosomal_Su5_D2-typ_SF"/>
</dbReference>
<dbReference type="InterPro" id="IPR014721">
    <property type="entry name" value="Ribsml_uS5_D2-typ_fold_subgr"/>
</dbReference>
<dbReference type="NCBIfam" id="TIGR00585">
    <property type="entry name" value="mutl"/>
    <property type="match status" value="1"/>
</dbReference>
<dbReference type="NCBIfam" id="NF000950">
    <property type="entry name" value="PRK00095.1-3"/>
    <property type="match status" value="1"/>
</dbReference>
<dbReference type="PANTHER" id="PTHR10073">
    <property type="entry name" value="DNA MISMATCH REPAIR PROTEIN MLH, PMS, MUTL"/>
    <property type="match status" value="1"/>
</dbReference>
<dbReference type="PANTHER" id="PTHR10073:SF12">
    <property type="entry name" value="DNA MISMATCH REPAIR PROTEIN MLH1"/>
    <property type="match status" value="1"/>
</dbReference>
<dbReference type="Pfam" id="PF01119">
    <property type="entry name" value="DNA_mis_repair"/>
    <property type="match status" value="1"/>
</dbReference>
<dbReference type="Pfam" id="PF13589">
    <property type="entry name" value="HATPase_c_3"/>
    <property type="match status" value="1"/>
</dbReference>
<dbReference type="Pfam" id="PF08676">
    <property type="entry name" value="MutL_C"/>
    <property type="match status" value="1"/>
</dbReference>
<dbReference type="SMART" id="SM01340">
    <property type="entry name" value="DNA_mis_repair"/>
    <property type="match status" value="1"/>
</dbReference>
<dbReference type="SMART" id="SM00853">
    <property type="entry name" value="MutL_C"/>
    <property type="match status" value="1"/>
</dbReference>
<dbReference type="SUPFAM" id="SSF55874">
    <property type="entry name" value="ATPase domain of HSP90 chaperone/DNA topoisomerase II/histidine kinase"/>
    <property type="match status" value="1"/>
</dbReference>
<dbReference type="SUPFAM" id="SSF118116">
    <property type="entry name" value="DNA mismatch repair protein MutL"/>
    <property type="match status" value="1"/>
</dbReference>
<dbReference type="SUPFAM" id="SSF54211">
    <property type="entry name" value="Ribosomal protein S5 domain 2-like"/>
    <property type="match status" value="1"/>
</dbReference>
<dbReference type="PROSITE" id="PS00058">
    <property type="entry name" value="DNA_MISMATCH_REPAIR_1"/>
    <property type="match status" value="1"/>
</dbReference>
<feature type="chain" id="PRO_1000096661" description="DNA mismatch repair protein MutL">
    <location>
        <begin position="1"/>
        <end position="668"/>
    </location>
</feature>
<accession>B2G6E6</accession>